<accession>Q57HC6</accession>
<feature type="chain" id="PRO_1000012798" description="ATP-dependent protease ATPase subunit HslU">
    <location>
        <begin position="1"/>
        <end position="443"/>
    </location>
</feature>
<feature type="binding site" evidence="1">
    <location>
        <position position="18"/>
    </location>
    <ligand>
        <name>ATP</name>
        <dbReference type="ChEBI" id="CHEBI:30616"/>
    </ligand>
</feature>
<feature type="binding site" evidence="1">
    <location>
        <begin position="60"/>
        <end position="65"/>
    </location>
    <ligand>
        <name>ATP</name>
        <dbReference type="ChEBI" id="CHEBI:30616"/>
    </ligand>
</feature>
<feature type="binding site" evidence="1">
    <location>
        <position position="256"/>
    </location>
    <ligand>
        <name>ATP</name>
        <dbReference type="ChEBI" id="CHEBI:30616"/>
    </ligand>
</feature>
<feature type="binding site" evidence="1">
    <location>
        <position position="321"/>
    </location>
    <ligand>
        <name>ATP</name>
        <dbReference type="ChEBI" id="CHEBI:30616"/>
    </ligand>
</feature>
<feature type="binding site" evidence="1">
    <location>
        <position position="393"/>
    </location>
    <ligand>
        <name>ATP</name>
        <dbReference type="ChEBI" id="CHEBI:30616"/>
    </ligand>
</feature>
<reference key="1">
    <citation type="journal article" date="2005" name="Nucleic Acids Res.">
        <title>The genome sequence of Salmonella enterica serovar Choleraesuis, a highly invasive and resistant zoonotic pathogen.</title>
        <authorList>
            <person name="Chiu C.-H."/>
            <person name="Tang P."/>
            <person name="Chu C."/>
            <person name="Hu S."/>
            <person name="Bao Q."/>
            <person name="Yu J."/>
            <person name="Chou Y.-Y."/>
            <person name="Wang H.-S."/>
            <person name="Lee Y.-S."/>
        </authorList>
    </citation>
    <scope>NUCLEOTIDE SEQUENCE [LARGE SCALE GENOMIC DNA]</scope>
    <source>
        <strain>SC-B67</strain>
    </source>
</reference>
<proteinExistence type="inferred from homology"/>
<keyword id="KW-0067">ATP-binding</keyword>
<keyword id="KW-0143">Chaperone</keyword>
<keyword id="KW-0963">Cytoplasm</keyword>
<keyword id="KW-0547">Nucleotide-binding</keyword>
<keyword id="KW-0346">Stress response</keyword>
<comment type="function">
    <text evidence="1">ATPase subunit of a proteasome-like degradation complex; this subunit has chaperone activity. The binding of ATP and its subsequent hydrolysis by HslU are essential for unfolding of protein substrates subsequently hydrolyzed by HslV. HslU recognizes the N-terminal part of its protein substrates and unfolds these before they are guided to HslV for hydrolysis.</text>
</comment>
<comment type="subunit">
    <text evidence="1">A double ring-shaped homohexamer of HslV is capped on each side by a ring-shaped HslU homohexamer. The assembly of the HslU/HslV complex is dependent on binding of ATP.</text>
</comment>
<comment type="subcellular location">
    <subcellularLocation>
        <location evidence="1">Cytoplasm</location>
    </subcellularLocation>
</comment>
<comment type="induction">
    <text evidence="1">By heat shock.</text>
</comment>
<comment type="similarity">
    <text evidence="1">Belongs to the ClpX chaperone family. HslU subfamily.</text>
</comment>
<sequence>MSEMTPREIVSELNKHIIGQDNAKRSVAIALRNRWRRMQLDEELRHEVTPKNILMIGPTGVGKTEIARRLAKLANAPFIKVEATKFTEVGYVGKEVDSIIRDLTDAAVKMVRVQAIEKNRYRAEELAEERILDVLIPPAKNNWGQAEQQQEPSAARQTFRKKLREGQLDDKEIEINLAAAPMGVEIMAPPGMEEMTSQLQSMFQNLGGQKQKPRKLKIKDAMKLLVEEEAAKLVNPEELKQDAIDAVEQHGIVFIDEIDKICKRGETSGPDVSREGVQRDLLPLVEGCTVSTKHGMVKTDHILFIASGAFQVAKPSDLIPELQGRLPIRVELQALTTSDFERILTEPNASVTVQYKALMATEGVNIEFTDSGIKRIAEAAWQVNETTENIGARRLHTVLERLMEEISYNASDLHGQNITIDAEYVSKHLDALVADEDLSRFIL</sequence>
<evidence type="ECO:0000255" key="1">
    <source>
        <dbReference type="HAMAP-Rule" id="MF_00249"/>
    </source>
</evidence>
<dbReference type="EMBL" id="AE017220">
    <property type="protein sequence ID" value="AAX67886.1"/>
    <property type="molecule type" value="Genomic_DNA"/>
</dbReference>
<dbReference type="RefSeq" id="WP_001293360.1">
    <property type="nucleotide sequence ID" value="NC_006905.1"/>
</dbReference>
<dbReference type="SMR" id="Q57HC6"/>
<dbReference type="KEGG" id="sec:SCH_3980"/>
<dbReference type="HOGENOM" id="CLU_033123_0_0_6"/>
<dbReference type="Proteomes" id="UP000000538">
    <property type="component" value="Chromosome"/>
</dbReference>
<dbReference type="GO" id="GO:0009376">
    <property type="term" value="C:HslUV protease complex"/>
    <property type="evidence" value="ECO:0007669"/>
    <property type="project" value="UniProtKB-UniRule"/>
</dbReference>
<dbReference type="GO" id="GO:0005524">
    <property type="term" value="F:ATP binding"/>
    <property type="evidence" value="ECO:0007669"/>
    <property type="project" value="UniProtKB-UniRule"/>
</dbReference>
<dbReference type="GO" id="GO:0016887">
    <property type="term" value="F:ATP hydrolysis activity"/>
    <property type="evidence" value="ECO:0007669"/>
    <property type="project" value="InterPro"/>
</dbReference>
<dbReference type="GO" id="GO:0008233">
    <property type="term" value="F:peptidase activity"/>
    <property type="evidence" value="ECO:0007669"/>
    <property type="project" value="InterPro"/>
</dbReference>
<dbReference type="GO" id="GO:0036402">
    <property type="term" value="F:proteasome-activating activity"/>
    <property type="evidence" value="ECO:0007669"/>
    <property type="project" value="UniProtKB-UniRule"/>
</dbReference>
<dbReference type="GO" id="GO:0043335">
    <property type="term" value="P:protein unfolding"/>
    <property type="evidence" value="ECO:0007669"/>
    <property type="project" value="UniProtKB-UniRule"/>
</dbReference>
<dbReference type="GO" id="GO:0051603">
    <property type="term" value="P:proteolysis involved in protein catabolic process"/>
    <property type="evidence" value="ECO:0007669"/>
    <property type="project" value="TreeGrafter"/>
</dbReference>
<dbReference type="CDD" id="cd19498">
    <property type="entry name" value="RecA-like_HslU"/>
    <property type="match status" value="1"/>
</dbReference>
<dbReference type="FunFam" id="1.10.8.10:FF:000012">
    <property type="entry name" value="ATP-dependent protease ATPase subunit HslU"/>
    <property type="match status" value="1"/>
</dbReference>
<dbReference type="FunFam" id="1.10.8.10:FF:000028">
    <property type="entry name" value="ATP-dependent protease ATPase subunit HslU"/>
    <property type="match status" value="1"/>
</dbReference>
<dbReference type="FunFam" id="1.10.8.60:FF:000027">
    <property type="entry name" value="ATP-dependent protease ATPase subunit HslU"/>
    <property type="match status" value="1"/>
</dbReference>
<dbReference type="FunFam" id="3.40.50.300:FF:000213">
    <property type="entry name" value="ATP-dependent protease ATPase subunit HslU"/>
    <property type="match status" value="1"/>
</dbReference>
<dbReference type="FunFam" id="3.40.50.300:FF:000220">
    <property type="entry name" value="ATP-dependent protease ATPase subunit HslU"/>
    <property type="match status" value="1"/>
</dbReference>
<dbReference type="Gene3D" id="1.10.8.60">
    <property type="match status" value="1"/>
</dbReference>
<dbReference type="Gene3D" id="1.10.8.10">
    <property type="entry name" value="DNA helicase RuvA subunit, C-terminal domain"/>
    <property type="match status" value="2"/>
</dbReference>
<dbReference type="Gene3D" id="3.40.50.300">
    <property type="entry name" value="P-loop containing nucleotide triphosphate hydrolases"/>
    <property type="match status" value="1"/>
</dbReference>
<dbReference type="HAMAP" id="MF_00249">
    <property type="entry name" value="HslU"/>
    <property type="match status" value="1"/>
</dbReference>
<dbReference type="InterPro" id="IPR003593">
    <property type="entry name" value="AAA+_ATPase"/>
</dbReference>
<dbReference type="InterPro" id="IPR050052">
    <property type="entry name" value="ATP-dep_Clp_protease_ClpX"/>
</dbReference>
<dbReference type="InterPro" id="IPR003959">
    <property type="entry name" value="ATPase_AAA_core"/>
</dbReference>
<dbReference type="InterPro" id="IPR019489">
    <property type="entry name" value="Clp_ATPase_C"/>
</dbReference>
<dbReference type="InterPro" id="IPR004491">
    <property type="entry name" value="HslU"/>
</dbReference>
<dbReference type="InterPro" id="IPR027417">
    <property type="entry name" value="P-loop_NTPase"/>
</dbReference>
<dbReference type="NCBIfam" id="TIGR00390">
    <property type="entry name" value="hslU"/>
    <property type="match status" value="1"/>
</dbReference>
<dbReference type="NCBIfam" id="NF003544">
    <property type="entry name" value="PRK05201.1"/>
    <property type="match status" value="1"/>
</dbReference>
<dbReference type="PANTHER" id="PTHR48102">
    <property type="entry name" value="ATP-DEPENDENT CLP PROTEASE ATP-BINDING SUBUNIT CLPX-LIKE, MITOCHONDRIAL-RELATED"/>
    <property type="match status" value="1"/>
</dbReference>
<dbReference type="PANTHER" id="PTHR48102:SF3">
    <property type="entry name" value="ATP-DEPENDENT PROTEASE ATPASE SUBUNIT HSLU"/>
    <property type="match status" value="1"/>
</dbReference>
<dbReference type="Pfam" id="PF00004">
    <property type="entry name" value="AAA"/>
    <property type="match status" value="1"/>
</dbReference>
<dbReference type="Pfam" id="PF07724">
    <property type="entry name" value="AAA_2"/>
    <property type="match status" value="1"/>
</dbReference>
<dbReference type="SMART" id="SM00382">
    <property type="entry name" value="AAA"/>
    <property type="match status" value="1"/>
</dbReference>
<dbReference type="SMART" id="SM01086">
    <property type="entry name" value="ClpB_D2-small"/>
    <property type="match status" value="1"/>
</dbReference>
<dbReference type="SUPFAM" id="SSF52540">
    <property type="entry name" value="P-loop containing nucleoside triphosphate hydrolases"/>
    <property type="match status" value="1"/>
</dbReference>
<protein>
    <recommendedName>
        <fullName evidence="1">ATP-dependent protease ATPase subunit HslU</fullName>
    </recommendedName>
    <alternativeName>
        <fullName evidence="1">Heat shock protein HslU</fullName>
    </alternativeName>
    <alternativeName>
        <fullName evidence="1">Unfoldase HslU</fullName>
    </alternativeName>
</protein>
<organism>
    <name type="scientific">Salmonella choleraesuis (strain SC-B67)</name>
    <dbReference type="NCBI Taxonomy" id="321314"/>
    <lineage>
        <taxon>Bacteria</taxon>
        <taxon>Pseudomonadati</taxon>
        <taxon>Pseudomonadota</taxon>
        <taxon>Gammaproteobacteria</taxon>
        <taxon>Enterobacterales</taxon>
        <taxon>Enterobacteriaceae</taxon>
        <taxon>Salmonella</taxon>
    </lineage>
</organism>
<gene>
    <name evidence="1" type="primary">hslU</name>
    <name type="ordered locus">SCH_3980</name>
</gene>
<name>HSLU_SALCH</name>